<dbReference type="EC" id="3.4.24.-" evidence="1"/>
<dbReference type="EMBL" id="FO081565">
    <property type="protein sequence ID" value="CCD72452.1"/>
    <property type="molecule type" value="Genomic_DNA"/>
</dbReference>
<dbReference type="EMBL" id="AJ561220">
    <property type="protein sequence ID" value="CAD99220.1"/>
    <property type="molecule type" value="mRNA"/>
</dbReference>
<dbReference type="PIR" id="T32205">
    <property type="entry name" value="T32205"/>
</dbReference>
<dbReference type="RefSeq" id="NP_503351.3">
    <property type="nucleotide sequence ID" value="NM_070950.4"/>
</dbReference>
<dbReference type="SMR" id="O16977"/>
<dbReference type="BioGRID" id="43668">
    <property type="interactions" value="1"/>
</dbReference>
<dbReference type="FunCoup" id="O16977">
    <property type="interactions" value="5"/>
</dbReference>
<dbReference type="STRING" id="6239.T02B11.7.1"/>
<dbReference type="MEROPS" id="M12.A40"/>
<dbReference type="GlyCosmos" id="O16977">
    <property type="glycosylation" value="6 sites, No reported glycans"/>
</dbReference>
<dbReference type="PaxDb" id="6239-T02B11.7"/>
<dbReference type="EnsemblMetazoa" id="T02B11.7.1">
    <property type="protein sequence ID" value="T02B11.7.1"/>
    <property type="gene ID" value="WBGene00003550"/>
</dbReference>
<dbReference type="GeneID" id="178595"/>
<dbReference type="KEGG" id="cel:CELE_T02B11.7"/>
<dbReference type="UCSC" id="T02B11.7">
    <property type="organism name" value="c. elegans"/>
</dbReference>
<dbReference type="AGR" id="WB:WBGene00003550"/>
<dbReference type="CTD" id="178595"/>
<dbReference type="WormBase" id="T02B11.7">
    <property type="protein sequence ID" value="CE50805"/>
    <property type="gene ID" value="WBGene00003550"/>
    <property type="gene designation" value="nas-32"/>
</dbReference>
<dbReference type="eggNOG" id="KOG3714">
    <property type="taxonomic scope" value="Eukaryota"/>
</dbReference>
<dbReference type="HOGENOM" id="CLU_421052_0_0_1"/>
<dbReference type="InParanoid" id="O16977"/>
<dbReference type="OrthoDB" id="5806856at2759"/>
<dbReference type="PhylomeDB" id="O16977"/>
<dbReference type="PRO" id="PR:O16977"/>
<dbReference type="Proteomes" id="UP000001940">
    <property type="component" value="Chromosome V"/>
</dbReference>
<dbReference type="Bgee" id="WBGene00003550">
    <property type="expression patterns" value="Expressed in larva and 1 other cell type or tissue"/>
</dbReference>
<dbReference type="GO" id="GO:0005576">
    <property type="term" value="C:extracellular region"/>
    <property type="evidence" value="ECO:0007669"/>
    <property type="project" value="UniProtKB-SubCell"/>
</dbReference>
<dbReference type="GO" id="GO:0004222">
    <property type="term" value="F:metalloendopeptidase activity"/>
    <property type="evidence" value="ECO:0000318"/>
    <property type="project" value="GO_Central"/>
</dbReference>
<dbReference type="GO" id="GO:0008270">
    <property type="term" value="F:zinc ion binding"/>
    <property type="evidence" value="ECO:0007669"/>
    <property type="project" value="InterPro"/>
</dbReference>
<dbReference type="GO" id="GO:0018996">
    <property type="term" value="P:molting cycle, collagen and cuticulin-based cuticle"/>
    <property type="evidence" value="ECO:0007669"/>
    <property type="project" value="InterPro"/>
</dbReference>
<dbReference type="GO" id="GO:0006508">
    <property type="term" value="P:proteolysis"/>
    <property type="evidence" value="ECO:0007669"/>
    <property type="project" value="UniProtKB-KW"/>
</dbReference>
<dbReference type="CDD" id="cd04280">
    <property type="entry name" value="ZnMc_astacin_like"/>
    <property type="match status" value="1"/>
</dbReference>
<dbReference type="Gene3D" id="3.40.390.10">
    <property type="entry name" value="Collagenase (Catalytic Domain)"/>
    <property type="match status" value="1"/>
</dbReference>
<dbReference type="InterPro" id="IPR034035">
    <property type="entry name" value="Astacin-like_dom"/>
</dbReference>
<dbReference type="InterPro" id="IPR024079">
    <property type="entry name" value="MetalloPept_cat_dom_sf"/>
</dbReference>
<dbReference type="InterPro" id="IPR017050">
    <property type="entry name" value="Metallopeptidase_nem"/>
</dbReference>
<dbReference type="InterPro" id="IPR001506">
    <property type="entry name" value="Peptidase_M12A"/>
</dbReference>
<dbReference type="InterPro" id="IPR006026">
    <property type="entry name" value="Peptidase_Metallo"/>
</dbReference>
<dbReference type="InterPro" id="IPR003582">
    <property type="entry name" value="ShKT_dom"/>
</dbReference>
<dbReference type="PANTHER" id="PTHR10127">
    <property type="entry name" value="DISCOIDIN, CUB, EGF, LAMININ , AND ZINC METALLOPROTEASE DOMAIN CONTAINING"/>
    <property type="match status" value="1"/>
</dbReference>
<dbReference type="PANTHER" id="PTHR10127:SF833">
    <property type="entry name" value="ZINC METALLOPROTEINASE NAS-32"/>
    <property type="match status" value="1"/>
</dbReference>
<dbReference type="Pfam" id="PF01400">
    <property type="entry name" value="Astacin"/>
    <property type="match status" value="1"/>
</dbReference>
<dbReference type="PIRSF" id="PIRSF036365">
    <property type="entry name" value="Astacin_nematoda"/>
    <property type="match status" value="1"/>
</dbReference>
<dbReference type="PRINTS" id="PR00480">
    <property type="entry name" value="ASTACIN"/>
</dbReference>
<dbReference type="SMART" id="SM00235">
    <property type="entry name" value="ZnMc"/>
    <property type="match status" value="1"/>
</dbReference>
<dbReference type="SUPFAM" id="SSF55486">
    <property type="entry name" value="Metalloproteases ('zincins'), catalytic domain"/>
    <property type="match status" value="1"/>
</dbReference>
<dbReference type="PROSITE" id="PS51864">
    <property type="entry name" value="ASTACIN"/>
    <property type="match status" value="1"/>
</dbReference>
<dbReference type="PROSITE" id="PS00022">
    <property type="entry name" value="EGF_1"/>
    <property type="match status" value="1"/>
</dbReference>
<dbReference type="PROSITE" id="PS01186">
    <property type="entry name" value="EGF_2"/>
    <property type="match status" value="1"/>
</dbReference>
<dbReference type="PROSITE" id="PS51670">
    <property type="entry name" value="SHKT"/>
    <property type="match status" value="1"/>
</dbReference>
<dbReference type="PROSITE" id="PS00142">
    <property type="entry name" value="ZINC_PROTEASE"/>
    <property type="match status" value="1"/>
</dbReference>
<evidence type="ECO:0000250" key="1">
    <source>
        <dbReference type="UniProtKB" id="A8Q2D1"/>
    </source>
</evidence>
<evidence type="ECO:0000250" key="2">
    <source>
        <dbReference type="UniProtKB" id="P07584"/>
    </source>
</evidence>
<evidence type="ECO:0000250" key="3">
    <source>
        <dbReference type="UniProtKB" id="P13497"/>
    </source>
</evidence>
<evidence type="ECO:0000255" key="4"/>
<evidence type="ECO:0000255" key="5">
    <source>
        <dbReference type="PROSITE-ProRule" id="PRU01005"/>
    </source>
</evidence>
<evidence type="ECO:0000255" key="6">
    <source>
        <dbReference type="PROSITE-ProRule" id="PRU01211"/>
    </source>
</evidence>
<evidence type="ECO:0000269" key="7">
    <source>
    </source>
</evidence>
<evidence type="ECO:0000305" key="8"/>
<comment type="function">
    <text evidence="2">Metalloprotease.</text>
</comment>
<comment type="cofactor">
    <cofactor evidence="6">
        <name>Zn(2+)</name>
        <dbReference type="ChEBI" id="CHEBI:29105"/>
    </cofactor>
    <text evidence="6">Binds 1 zinc ion per subunit.</text>
</comment>
<comment type="subcellular location">
    <subcellularLocation>
        <location evidence="8">Secreted</location>
    </subcellularLocation>
</comment>
<comment type="tissue specificity">
    <text evidence="7">Expressed in pharyngeal, anal depressor, intestinal and vulva muscles, head neurons and head mesodermal cell.</text>
</comment>
<organism>
    <name type="scientific">Caenorhabditis elegans</name>
    <dbReference type="NCBI Taxonomy" id="6239"/>
    <lineage>
        <taxon>Eukaryota</taxon>
        <taxon>Metazoa</taxon>
        <taxon>Ecdysozoa</taxon>
        <taxon>Nematoda</taxon>
        <taxon>Chromadorea</taxon>
        <taxon>Rhabditida</taxon>
        <taxon>Rhabditina</taxon>
        <taxon>Rhabditomorpha</taxon>
        <taxon>Rhabditoidea</taxon>
        <taxon>Rhabditidae</taxon>
        <taxon>Peloderinae</taxon>
        <taxon>Caenorhabditis</taxon>
    </lineage>
</organism>
<reference key="1">
    <citation type="journal article" date="1998" name="Science">
        <title>Genome sequence of the nematode C. elegans: a platform for investigating biology.</title>
        <authorList>
            <consortium name="The C. elegans sequencing consortium"/>
        </authorList>
    </citation>
    <scope>NUCLEOTIDE SEQUENCE [LARGE SCALE GENOMIC DNA]</scope>
    <source>
        <strain>Bristol N2</strain>
    </source>
</reference>
<reference key="2">
    <citation type="journal article" date="2003" name="Eur. J. Biochem.">
        <title>The astacin protein family in Caenorhabditis elegans.</title>
        <authorList>
            <person name="Moehrlen F."/>
            <person name="Hutter H."/>
            <person name="Zwilling R."/>
        </authorList>
    </citation>
    <scope>NUCLEOTIDE SEQUENCE [MRNA] OF 291-367</scope>
    <scope>NOMENCLATURE</scope>
    <source>
        <strain>Bristol N2</strain>
    </source>
</reference>
<reference key="3">
    <citation type="journal article" date="2010" name="BMC Dev. Biol.">
        <title>Characterization of the astacin family of metalloproteases in C. elegans.</title>
        <authorList>
            <person name="Park J.O."/>
            <person name="Pan J."/>
            <person name="Moehrlen F."/>
            <person name="Schupp M.O."/>
            <person name="Johnsen R."/>
            <person name="Baillie D.L."/>
            <person name="Zapf R."/>
            <person name="Moerman D.G."/>
            <person name="Hutter H."/>
        </authorList>
    </citation>
    <scope>TISSUE SPECIFICITY</scope>
</reference>
<gene>
    <name type="primary">nas-32</name>
    <name type="ORF">T02B11.7</name>
</gene>
<name>NAS32_CAEEL</name>
<feature type="signal peptide" evidence="4">
    <location>
        <begin position="1"/>
        <end position="21"/>
    </location>
</feature>
<feature type="propeptide" id="PRO_0000442679" evidence="3">
    <location>
        <begin position="22"/>
        <end position="202"/>
    </location>
</feature>
<feature type="chain" id="PRO_0000028936" description="Zinc metalloproteinase nas-32">
    <location>
        <begin position="203"/>
        <end position="651"/>
    </location>
</feature>
<feature type="domain" description="Peptidase M12A" evidence="6">
    <location>
        <begin position="203"/>
        <end position="394"/>
    </location>
</feature>
<feature type="domain" description="EGF-like">
    <location>
        <begin position="380"/>
        <end position="433"/>
    </location>
</feature>
<feature type="domain" description="CUB">
    <location>
        <begin position="434"/>
        <end position="554"/>
    </location>
</feature>
<feature type="domain" description="ShKT" evidence="5">
    <location>
        <begin position="610"/>
        <end position="647"/>
    </location>
</feature>
<feature type="active site" evidence="6">
    <location>
        <position position="292"/>
    </location>
</feature>
<feature type="binding site" evidence="6">
    <location>
        <position position="291"/>
    </location>
    <ligand>
        <name>Zn(2+)</name>
        <dbReference type="ChEBI" id="CHEBI:29105"/>
        <note>catalytic</note>
    </ligand>
</feature>
<feature type="binding site" evidence="6">
    <location>
        <position position="295"/>
    </location>
    <ligand>
        <name>Zn(2+)</name>
        <dbReference type="ChEBI" id="CHEBI:29105"/>
        <note>catalytic</note>
    </ligand>
</feature>
<feature type="binding site" evidence="6">
    <location>
        <position position="301"/>
    </location>
    <ligand>
        <name>Zn(2+)</name>
        <dbReference type="ChEBI" id="CHEBI:29105"/>
        <note>catalytic</note>
    </ligand>
</feature>
<feature type="glycosylation site" description="N-linked (GlcNAc...) asparagine" evidence="4">
    <location>
        <position position="25"/>
    </location>
</feature>
<feature type="glycosylation site" description="N-linked (GlcNAc...) asparagine" evidence="4">
    <location>
        <position position="72"/>
    </location>
</feature>
<feature type="glycosylation site" description="N-linked (GlcNAc...) asparagine" evidence="4">
    <location>
        <position position="251"/>
    </location>
</feature>
<feature type="glycosylation site" description="N-linked (GlcNAc...) asparagine" evidence="4">
    <location>
        <position position="411"/>
    </location>
</feature>
<feature type="glycosylation site" description="N-linked (GlcNAc...) asparagine" evidence="4">
    <location>
        <position position="453"/>
    </location>
</feature>
<feature type="glycosylation site" description="N-linked (GlcNAc...) asparagine" evidence="4">
    <location>
        <position position="557"/>
    </location>
</feature>
<feature type="disulfide bond" evidence="6">
    <location>
        <begin position="245"/>
        <end position="393"/>
    </location>
</feature>
<feature type="disulfide bond" evidence="6">
    <location>
        <begin position="264"/>
        <end position="283"/>
    </location>
</feature>
<feature type="disulfide bond" evidence="5">
    <location>
        <begin position="395"/>
        <end position="412"/>
    </location>
</feature>
<feature type="disulfide bond" evidence="5">
    <location>
        <begin position="415"/>
        <end position="426"/>
    </location>
</feature>
<feature type="disulfide bond" evidence="5">
    <location>
        <begin position="434"/>
        <end position="467"/>
    </location>
</feature>
<feature type="disulfide bond" evidence="5">
    <location>
        <begin position="495"/>
        <end position="516"/>
    </location>
</feature>
<feature type="disulfide bond" evidence="5">
    <location>
        <begin position="610"/>
        <end position="647"/>
    </location>
</feature>
<feature type="disulfide bond" evidence="5">
    <location>
        <begin position="619"/>
        <end position="640"/>
    </location>
</feature>
<feature type="disulfide bond" evidence="5">
    <location>
        <begin position="628"/>
        <end position="644"/>
    </location>
</feature>
<accession>O16977</accession>
<accession>Q7Z0M1</accession>
<sequence>MRRFFICYIGFLSIFLDFILADKDNNSEEERDRKFDWKFENENGKPEHETVTVPKLPDGSYFWKWTWNSRINSTTAATPTSTVTTSTSAPTTSPRVYKLKSEARKSLRKALRGVPPEKRKKQLKKMGKKMMKIPKITKKESNKLHKSYRKVKITENPPALDMFEVNERAGLNEYLFQGDINLNNNQIAKISSEQSSKSRRKKRQIDNLAQFWPGKVVYYYFDSGLTTTVQQIVRDAITFLESNTCLKFELNSTATNRIFSGVGCYSDTGMLGGEQTLSLGYGCEVTGTAAHEIAHTLGLFHTQMRSDRDDYVTIDLTDVPESSQQNFIKLTEATSTNLVDYEYGSFMHYSGRAFVSSGGVDSIVPKDPVMVYTMGGRIVTFLDLKMLNTHYSCSCPTILSCGNGGFTNPANCSVCICPYGFGGALCTERTDYGCGSTLTATDTWQQETYTFGNASNSATARPSAVYCNHWIQAPVGKQIQFRIDSTYNTQCVYGCTFNGVEPKLKSDMTITQARYCCDEFNAEIMTADFGVNPMPVFSFNRYYKTTYTWSYRYVDSNVTACADTSDKATCLSLKSAKEQGCSIYDTAQLKVMCAATMDLCGKVASDDGTCKDRFPKSQCSTYSTNGMCTQQPPLAAEFSCAETCGFCTNPV</sequence>
<protein>
    <recommendedName>
        <fullName>Zinc metalloproteinase nas-32</fullName>
        <ecNumber evidence="1">3.4.24.-</ecNumber>
    </recommendedName>
    <alternativeName>
        <fullName>Nematode astacin 32</fullName>
    </alternativeName>
</protein>
<keyword id="KW-0165">Cleavage on pair of basic residues</keyword>
<keyword id="KW-1015">Disulfide bond</keyword>
<keyword id="KW-0245">EGF-like domain</keyword>
<keyword id="KW-0325">Glycoprotein</keyword>
<keyword id="KW-0378">Hydrolase</keyword>
<keyword id="KW-0479">Metal-binding</keyword>
<keyword id="KW-0482">Metalloprotease</keyword>
<keyword id="KW-0645">Protease</keyword>
<keyword id="KW-1185">Reference proteome</keyword>
<keyword id="KW-0964">Secreted</keyword>
<keyword id="KW-0732">Signal</keyword>
<keyword id="KW-0862">Zinc</keyword>
<keyword id="KW-0865">Zymogen</keyword>
<proteinExistence type="evidence at transcript level"/>